<dbReference type="EC" id="3.1.26.3"/>
<dbReference type="EMBL" id="CP001172">
    <property type="protein sequence ID" value="ACJ56668.1"/>
    <property type="status" value="ALT_INIT"/>
    <property type="molecule type" value="Genomic_DNA"/>
</dbReference>
<dbReference type="RefSeq" id="WP_000160699.1">
    <property type="nucleotide sequence ID" value="NZ_CP001172.1"/>
</dbReference>
<dbReference type="SMR" id="B7GYT0"/>
<dbReference type="GeneID" id="92894829"/>
<dbReference type="HOGENOM" id="CLU_000907_1_1_6"/>
<dbReference type="Proteomes" id="UP000006924">
    <property type="component" value="Chromosome"/>
</dbReference>
<dbReference type="GO" id="GO:0005737">
    <property type="term" value="C:cytoplasm"/>
    <property type="evidence" value="ECO:0007669"/>
    <property type="project" value="UniProtKB-SubCell"/>
</dbReference>
<dbReference type="GO" id="GO:0046872">
    <property type="term" value="F:metal ion binding"/>
    <property type="evidence" value="ECO:0007669"/>
    <property type="project" value="UniProtKB-KW"/>
</dbReference>
<dbReference type="GO" id="GO:0004525">
    <property type="term" value="F:ribonuclease III activity"/>
    <property type="evidence" value="ECO:0007669"/>
    <property type="project" value="UniProtKB-UniRule"/>
</dbReference>
<dbReference type="GO" id="GO:0019843">
    <property type="term" value="F:rRNA binding"/>
    <property type="evidence" value="ECO:0007669"/>
    <property type="project" value="UniProtKB-KW"/>
</dbReference>
<dbReference type="GO" id="GO:0006397">
    <property type="term" value="P:mRNA processing"/>
    <property type="evidence" value="ECO:0007669"/>
    <property type="project" value="UniProtKB-UniRule"/>
</dbReference>
<dbReference type="GO" id="GO:0006364">
    <property type="term" value="P:rRNA processing"/>
    <property type="evidence" value="ECO:0007669"/>
    <property type="project" value="UniProtKB-UniRule"/>
</dbReference>
<dbReference type="GO" id="GO:0008033">
    <property type="term" value="P:tRNA processing"/>
    <property type="evidence" value="ECO:0007669"/>
    <property type="project" value="UniProtKB-KW"/>
</dbReference>
<dbReference type="CDD" id="cd10845">
    <property type="entry name" value="DSRM_RNAse_III_family"/>
    <property type="match status" value="1"/>
</dbReference>
<dbReference type="CDD" id="cd00593">
    <property type="entry name" value="RIBOc"/>
    <property type="match status" value="1"/>
</dbReference>
<dbReference type="FunFam" id="1.10.1520.10:FF:000001">
    <property type="entry name" value="Ribonuclease 3"/>
    <property type="match status" value="1"/>
</dbReference>
<dbReference type="FunFam" id="3.30.160.20:FF:000003">
    <property type="entry name" value="Ribonuclease 3"/>
    <property type="match status" value="1"/>
</dbReference>
<dbReference type="Gene3D" id="3.30.160.20">
    <property type="match status" value="1"/>
</dbReference>
<dbReference type="Gene3D" id="1.10.1520.10">
    <property type="entry name" value="Ribonuclease III domain"/>
    <property type="match status" value="1"/>
</dbReference>
<dbReference type="HAMAP" id="MF_00104">
    <property type="entry name" value="RNase_III"/>
    <property type="match status" value="1"/>
</dbReference>
<dbReference type="InterPro" id="IPR014720">
    <property type="entry name" value="dsRBD_dom"/>
</dbReference>
<dbReference type="InterPro" id="IPR011907">
    <property type="entry name" value="RNase_III"/>
</dbReference>
<dbReference type="InterPro" id="IPR000999">
    <property type="entry name" value="RNase_III_dom"/>
</dbReference>
<dbReference type="InterPro" id="IPR036389">
    <property type="entry name" value="RNase_III_sf"/>
</dbReference>
<dbReference type="NCBIfam" id="TIGR02191">
    <property type="entry name" value="RNaseIII"/>
    <property type="match status" value="1"/>
</dbReference>
<dbReference type="PANTHER" id="PTHR14950">
    <property type="entry name" value="DICER-RELATED"/>
    <property type="match status" value="1"/>
</dbReference>
<dbReference type="PANTHER" id="PTHR14950:SF37">
    <property type="entry name" value="ENDORIBONUCLEASE DICER"/>
    <property type="match status" value="1"/>
</dbReference>
<dbReference type="Pfam" id="PF00035">
    <property type="entry name" value="dsrm"/>
    <property type="match status" value="1"/>
</dbReference>
<dbReference type="Pfam" id="PF14622">
    <property type="entry name" value="Ribonucleas_3_3"/>
    <property type="match status" value="1"/>
</dbReference>
<dbReference type="SMART" id="SM00358">
    <property type="entry name" value="DSRM"/>
    <property type="match status" value="1"/>
</dbReference>
<dbReference type="SMART" id="SM00535">
    <property type="entry name" value="RIBOc"/>
    <property type="match status" value="1"/>
</dbReference>
<dbReference type="SUPFAM" id="SSF54768">
    <property type="entry name" value="dsRNA-binding domain-like"/>
    <property type="match status" value="1"/>
</dbReference>
<dbReference type="SUPFAM" id="SSF69065">
    <property type="entry name" value="RNase III domain-like"/>
    <property type="match status" value="1"/>
</dbReference>
<dbReference type="PROSITE" id="PS50137">
    <property type="entry name" value="DS_RBD"/>
    <property type="match status" value="1"/>
</dbReference>
<dbReference type="PROSITE" id="PS00517">
    <property type="entry name" value="RNASE_3_1"/>
    <property type="match status" value="1"/>
</dbReference>
<dbReference type="PROSITE" id="PS50142">
    <property type="entry name" value="RNASE_3_2"/>
    <property type="match status" value="1"/>
</dbReference>
<gene>
    <name type="primary">rnc</name>
    <name type="ordered locus">ABBFA_000926</name>
</gene>
<name>RNC_ACIB3</name>
<organism>
    <name type="scientific">Acinetobacter baumannii (strain AB307-0294)</name>
    <dbReference type="NCBI Taxonomy" id="557600"/>
    <lineage>
        <taxon>Bacteria</taxon>
        <taxon>Pseudomonadati</taxon>
        <taxon>Pseudomonadota</taxon>
        <taxon>Gammaproteobacteria</taxon>
        <taxon>Moraxellales</taxon>
        <taxon>Moraxellaceae</taxon>
        <taxon>Acinetobacter</taxon>
        <taxon>Acinetobacter calcoaceticus/baumannii complex</taxon>
    </lineage>
</organism>
<proteinExistence type="inferred from homology"/>
<reference key="1">
    <citation type="journal article" date="2008" name="J. Bacteriol.">
        <title>Comparative genome sequence analysis of multidrug-resistant Acinetobacter baumannii.</title>
        <authorList>
            <person name="Adams M.D."/>
            <person name="Goglin K."/>
            <person name="Molyneaux N."/>
            <person name="Hujer K.M."/>
            <person name="Lavender H."/>
            <person name="Jamison J.J."/>
            <person name="MacDonald I.J."/>
            <person name="Martin K.M."/>
            <person name="Russo T."/>
            <person name="Campagnari A.A."/>
            <person name="Hujer A.M."/>
            <person name="Bonomo R.A."/>
            <person name="Gill S.R."/>
        </authorList>
    </citation>
    <scope>NUCLEOTIDE SEQUENCE [LARGE SCALE GENOMIC DNA]</scope>
    <source>
        <strain>AB307-0294</strain>
    </source>
</reference>
<feature type="chain" id="PRO_0000416602" description="Ribonuclease 3">
    <location>
        <begin position="1"/>
        <end position="230"/>
    </location>
</feature>
<feature type="domain" description="RNase III">
    <location>
        <begin position="10"/>
        <end position="133"/>
    </location>
</feature>
<feature type="domain" description="DRBM">
    <location>
        <begin position="161"/>
        <end position="230"/>
    </location>
</feature>
<feature type="active site" evidence="2">
    <location>
        <position position="50"/>
    </location>
</feature>
<feature type="active site" evidence="1">
    <location>
        <position position="122"/>
    </location>
</feature>
<feature type="binding site" evidence="1">
    <location>
        <position position="46"/>
    </location>
    <ligand>
        <name>Mg(2+)</name>
        <dbReference type="ChEBI" id="CHEBI:18420"/>
    </ligand>
</feature>
<feature type="binding site" evidence="1">
    <location>
        <position position="119"/>
    </location>
    <ligand>
        <name>Mg(2+)</name>
        <dbReference type="ChEBI" id="CHEBI:18420"/>
    </ligand>
</feature>
<feature type="binding site" evidence="1">
    <location>
        <position position="122"/>
    </location>
    <ligand>
        <name>Mg(2+)</name>
        <dbReference type="ChEBI" id="CHEBI:18420"/>
    </ligand>
</feature>
<protein>
    <recommendedName>
        <fullName>Ribonuclease 3</fullName>
        <ecNumber>3.1.26.3</ecNumber>
    </recommendedName>
    <alternativeName>
        <fullName>Ribonuclease III</fullName>
        <shortName>RNase III</shortName>
    </alternativeName>
</protein>
<comment type="function">
    <text evidence="1">Digests double-stranded RNA. Involved in the processing of primary rRNA transcript to yield the immediate precursors to the large and small rRNAs (23S and 16S). Processes some mRNAs, and tRNAs when they are encoded in the rRNA operon. Processes pre-crRNA and tracrRNA of type II CRISPR loci if present in the organism (By similarity).</text>
</comment>
<comment type="catalytic activity">
    <reaction>
        <text>Endonucleolytic cleavage to 5'-phosphomonoester.</text>
        <dbReference type="EC" id="3.1.26.3"/>
    </reaction>
</comment>
<comment type="cofactor">
    <cofactor evidence="1">
        <name>Mg(2+)</name>
        <dbReference type="ChEBI" id="CHEBI:18420"/>
    </cofactor>
</comment>
<comment type="subunit">
    <text evidence="1">Homodimer.</text>
</comment>
<comment type="subcellular location">
    <subcellularLocation>
        <location evidence="1">Cytoplasm</location>
    </subcellularLocation>
</comment>
<comment type="similarity">
    <text evidence="3">Belongs to the ribonuclease III family.</text>
</comment>
<comment type="sequence caution" evidence="3">
    <conflict type="erroneous initiation">
        <sequence resource="EMBL-CDS" id="ACJ56668"/>
    </conflict>
    <text>Truncated N-terminus.</text>
</comment>
<sequence>MTKHQFKLSDPRLLSRIGYQFKQPELLQLALTHRSVSHKYNYERLEFLGDSLLGMIIANYLYHAYPHENEGRLTRMRATLVRQEALGKIATDLQLSRCLILSTGELKSGGHHRESILADTVEAIIGAIYLDSSDLNLLKDIVLKWYTPYLDHIEPTDQLKDPKSRLQEYLQARKKPLPVYEVVDIQGDAPHQHFKVECLVDGLSKIHGEGSSRRFAEQAAAAEILKLLEQ</sequence>
<accession>B7GYT0</accession>
<keyword id="KW-0963">Cytoplasm</keyword>
<keyword id="KW-0255">Endonuclease</keyword>
<keyword id="KW-0378">Hydrolase</keyword>
<keyword id="KW-0460">Magnesium</keyword>
<keyword id="KW-0479">Metal-binding</keyword>
<keyword id="KW-0507">mRNA processing</keyword>
<keyword id="KW-0540">Nuclease</keyword>
<keyword id="KW-0694">RNA-binding</keyword>
<keyword id="KW-0698">rRNA processing</keyword>
<keyword id="KW-0699">rRNA-binding</keyword>
<keyword id="KW-0819">tRNA processing</keyword>
<evidence type="ECO:0000250" key="1"/>
<evidence type="ECO:0000255" key="2"/>
<evidence type="ECO:0000305" key="3"/>